<accession>Q4FUE5</accession>
<dbReference type="EMBL" id="CP000082">
    <property type="protein sequence ID" value="AAZ18363.1"/>
    <property type="molecule type" value="Genomic_DNA"/>
</dbReference>
<dbReference type="RefSeq" id="WP_011279796.1">
    <property type="nucleotide sequence ID" value="NC_007204.1"/>
</dbReference>
<dbReference type="SMR" id="Q4FUE5"/>
<dbReference type="STRING" id="259536.Psyc_0500"/>
<dbReference type="KEGG" id="par:Psyc_0500"/>
<dbReference type="eggNOG" id="COG0198">
    <property type="taxonomic scope" value="Bacteria"/>
</dbReference>
<dbReference type="HOGENOM" id="CLU_093315_2_2_6"/>
<dbReference type="OrthoDB" id="9807419at2"/>
<dbReference type="Proteomes" id="UP000000546">
    <property type="component" value="Chromosome"/>
</dbReference>
<dbReference type="GO" id="GO:1990904">
    <property type="term" value="C:ribonucleoprotein complex"/>
    <property type="evidence" value="ECO:0007669"/>
    <property type="project" value="UniProtKB-KW"/>
</dbReference>
<dbReference type="GO" id="GO:0005840">
    <property type="term" value="C:ribosome"/>
    <property type="evidence" value="ECO:0007669"/>
    <property type="project" value="UniProtKB-KW"/>
</dbReference>
<dbReference type="GO" id="GO:0019843">
    <property type="term" value="F:rRNA binding"/>
    <property type="evidence" value="ECO:0007669"/>
    <property type="project" value="UniProtKB-UniRule"/>
</dbReference>
<dbReference type="GO" id="GO:0003735">
    <property type="term" value="F:structural constituent of ribosome"/>
    <property type="evidence" value="ECO:0007669"/>
    <property type="project" value="InterPro"/>
</dbReference>
<dbReference type="GO" id="GO:0006412">
    <property type="term" value="P:translation"/>
    <property type="evidence" value="ECO:0007669"/>
    <property type="project" value="UniProtKB-UniRule"/>
</dbReference>
<dbReference type="CDD" id="cd06089">
    <property type="entry name" value="KOW_RPL26"/>
    <property type="match status" value="1"/>
</dbReference>
<dbReference type="FunFam" id="2.30.30.30:FF:000004">
    <property type="entry name" value="50S ribosomal protein L24"/>
    <property type="match status" value="1"/>
</dbReference>
<dbReference type="Gene3D" id="2.30.30.30">
    <property type="match status" value="1"/>
</dbReference>
<dbReference type="HAMAP" id="MF_01326_B">
    <property type="entry name" value="Ribosomal_uL24_B"/>
    <property type="match status" value="1"/>
</dbReference>
<dbReference type="InterPro" id="IPR005824">
    <property type="entry name" value="KOW"/>
</dbReference>
<dbReference type="InterPro" id="IPR014722">
    <property type="entry name" value="Rib_uL2_dom2"/>
</dbReference>
<dbReference type="InterPro" id="IPR003256">
    <property type="entry name" value="Ribosomal_uL24"/>
</dbReference>
<dbReference type="InterPro" id="IPR005825">
    <property type="entry name" value="Ribosomal_uL24_CS"/>
</dbReference>
<dbReference type="InterPro" id="IPR041988">
    <property type="entry name" value="Ribosomal_uL24_KOW"/>
</dbReference>
<dbReference type="InterPro" id="IPR008991">
    <property type="entry name" value="Translation_prot_SH3-like_sf"/>
</dbReference>
<dbReference type="NCBIfam" id="TIGR01079">
    <property type="entry name" value="rplX_bact"/>
    <property type="match status" value="1"/>
</dbReference>
<dbReference type="PANTHER" id="PTHR12903">
    <property type="entry name" value="MITOCHONDRIAL RIBOSOMAL PROTEIN L24"/>
    <property type="match status" value="1"/>
</dbReference>
<dbReference type="Pfam" id="PF00467">
    <property type="entry name" value="KOW"/>
    <property type="match status" value="1"/>
</dbReference>
<dbReference type="Pfam" id="PF17136">
    <property type="entry name" value="ribosomal_L24"/>
    <property type="match status" value="1"/>
</dbReference>
<dbReference type="SMART" id="SM00739">
    <property type="entry name" value="KOW"/>
    <property type="match status" value="1"/>
</dbReference>
<dbReference type="SUPFAM" id="SSF50104">
    <property type="entry name" value="Translation proteins SH3-like domain"/>
    <property type="match status" value="1"/>
</dbReference>
<dbReference type="PROSITE" id="PS01108">
    <property type="entry name" value="RIBOSOMAL_L24"/>
    <property type="match status" value="1"/>
</dbReference>
<organism>
    <name type="scientific">Psychrobacter arcticus (strain DSM 17307 / VKM B-2377 / 273-4)</name>
    <dbReference type="NCBI Taxonomy" id="259536"/>
    <lineage>
        <taxon>Bacteria</taxon>
        <taxon>Pseudomonadati</taxon>
        <taxon>Pseudomonadota</taxon>
        <taxon>Gammaproteobacteria</taxon>
        <taxon>Moraxellales</taxon>
        <taxon>Moraxellaceae</taxon>
        <taxon>Psychrobacter</taxon>
    </lineage>
</organism>
<feature type="chain" id="PRO_0000241645" description="Large ribosomal subunit protein uL24">
    <location>
        <begin position="1"/>
        <end position="105"/>
    </location>
</feature>
<reference key="1">
    <citation type="journal article" date="2010" name="Appl. Environ. Microbiol.">
        <title>The genome sequence of Psychrobacter arcticus 273-4, a psychroactive Siberian permafrost bacterium, reveals mechanisms for adaptation to low-temperature growth.</title>
        <authorList>
            <person name="Ayala-del-Rio H.L."/>
            <person name="Chain P.S."/>
            <person name="Grzymski J.J."/>
            <person name="Ponder M.A."/>
            <person name="Ivanova N."/>
            <person name="Bergholz P.W."/>
            <person name="Di Bartolo G."/>
            <person name="Hauser L."/>
            <person name="Land M."/>
            <person name="Bakermans C."/>
            <person name="Rodrigues D."/>
            <person name="Klappenbach J."/>
            <person name="Zarka D."/>
            <person name="Larimer F."/>
            <person name="Richardson P."/>
            <person name="Murray A."/>
            <person name="Thomashow M."/>
            <person name="Tiedje J.M."/>
        </authorList>
    </citation>
    <scope>NUCLEOTIDE SEQUENCE [LARGE SCALE GENOMIC DNA]</scope>
    <source>
        <strain>DSM 17307 / VKM B-2377 / 273-4</strain>
    </source>
</reference>
<protein>
    <recommendedName>
        <fullName evidence="1">Large ribosomal subunit protein uL24</fullName>
    </recommendedName>
    <alternativeName>
        <fullName evidence="2">50S ribosomal protein L24</fullName>
    </alternativeName>
</protein>
<keyword id="KW-1185">Reference proteome</keyword>
<keyword id="KW-0687">Ribonucleoprotein</keyword>
<keyword id="KW-0689">Ribosomal protein</keyword>
<keyword id="KW-0694">RNA-binding</keyword>
<keyword id="KW-0699">rRNA-binding</keyword>
<gene>
    <name evidence="1" type="primary">rplX</name>
    <name type="ordered locus">Psyc_0500</name>
</gene>
<comment type="function">
    <text evidence="1">One of two assembly initiator proteins, it binds directly to the 5'-end of the 23S rRNA, where it nucleates assembly of the 50S subunit.</text>
</comment>
<comment type="function">
    <text evidence="1">One of the proteins that surrounds the polypeptide exit tunnel on the outside of the subunit.</text>
</comment>
<comment type="subunit">
    <text evidence="1">Part of the 50S ribosomal subunit.</text>
</comment>
<comment type="similarity">
    <text evidence="1">Belongs to the universal ribosomal protein uL24 family.</text>
</comment>
<proteinExistence type="inferred from homology"/>
<name>RL24_PSYA2</name>
<evidence type="ECO:0000255" key="1">
    <source>
        <dbReference type="HAMAP-Rule" id="MF_01326"/>
    </source>
</evidence>
<evidence type="ECO:0000305" key="2"/>
<sequence length="105" mass="11445">MSKLRKGDTVIVIAGKDKGKQGTVQAVKNDRIKVEGINIVTKHQKPNQATGVEGGILKQEAFLHISNVAILNAQTQKADRITYQFGEDGKKQRVYRSNGEVVATA</sequence>